<sequence>MMPTELTSLIPGMFDDFSYDSTASTDDYMNLNFSSFFCKKNNVRQFASHFLPPLYWLVFIVGTLGNSLVILVYWYCTRVKTMTDMFLLNLAIADLLFLATLPFWAIAAAGQWMFQTFMCKVVNSMYKMNFYSCVLLIMCISVDRYIAIVQAMKAQVWRQKRLLYSKMVCITIWVMAAVLCTPEILYSQVSGESGIATCTMVYPKDKNAKLKSAVLILKVTLGFFLPFMVMAFCYTIIIHTLVQAKKSSKHKALKVTITVLTVFIMSQFPYNSILVVQAVDAYAMFISNCTISTNIDICFQVTQTIAFFHSCLNPVLYVFVGERFRRDLVKTLKNLGCISQAQWVSFTRREGSLKLSSMLLETTSGALSL</sequence>
<proteinExistence type="evidence at transcript level"/>
<keyword id="KW-1003">Cell membrane</keyword>
<keyword id="KW-1015">Disulfide bond</keyword>
<keyword id="KW-0297">G-protein coupled receptor</keyword>
<keyword id="KW-0325">Glycoprotein</keyword>
<keyword id="KW-0472">Membrane</keyword>
<keyword id="KW-0675">Receptor</keyword>
<keyword id="KW-1185">Reference proteome</keyword>
<keyword id="KW-0807">Transducer</keyword>
<keyword id="KW-0812">Transmembrane</keyword>
<keyword id="KW-1133">Transmembrane helix</keyword>
<accession>Q9WUT7</accession>
<accession>A2RSM5</accession>
<accession>Q543I4</accession>
<dbReference type="EMBL" id="AJ132336">
    <property type="protein sequence ID" value="CAB43480.1"/>
    <property type="molecule type" value="mRNA"/>
</dbReference>
<dbReference type="EMBL" id="AJ131357">
    <property type="protein sequence ID" value="CAB66136.2"/>
    <property type="molecule type" value="mRNA"/>
</dbReference>
<dbReference type="EMBL" id="AK019478">
    <property type="protein sequence ID" value="BAB31747.1"/>
    <property type="molecule type" value="mRNA"/>
</dbReference>
<dbReference type="EMBL" id="AK050615">
    <property type="protein sequence ID" value="BAC34344.1"/>
    <property type="molecule type" value="mRNA"/>
</dbReference>
<dbReference type="EMBL" id="AK153975">
    <property type="protein sequence ID" value="BAE32291.1"/>
    <property type="molecule type" value="mRNA"/>
</dbReference>
<dbReference type="EMBL" id="BC132166">
    <property type="protein sequence ID" value="AAI32167.1"/>
    <property type="molecule type" value="mRNA"/>
</dbReference>
<dbReference type="EMBL" id="BC132466">
    <property type="protein sequence ID" value="AAI32467.1"/>
    <property type="molecule type" value="mRNA"/>
</dbReference>
<dbReference type="CCDS" id="CCDS23662.1"/>
<dbReference type="RefSeq" id="NP_001160097.1">
    <property type="nucleotide sequence ID" value="NM_001166625.1"/>
</dbReference>
<dbReference type="RefSeq" id="NP_034043.1">
    <property type="nucleotide sequence ID" value="NM_009913.6"/>
</dbReference>
<dbReference type="SMR" id="Q9WUT7"/>
<dbReference type="BioGRID" id="198769">
    <property type="interactions" value="1"/>
</dbReference>
<dbReference type="DIP" id="DIP-5886N"/>
<dbReference type="FunCoup" id="Q9WUT7">
    <property type="interactions" value="441"/>
</dbReference>
<dbReference type="STRING" id="10090.ENSMUSP00000127024"/>
<dbReference type="GlyCosmos" id="Q9WUT7">
    <property type="glycosylation" value="1 site, No reported glycans"/>
</dbReference>
<dbReference type="GlyGen" id="Q9WUT7">
    <property type="glycosylation" value="1 site"/>
</dbReference>
<dbReference type="iPTMnet" id="Q9WUT7"/>
<dbReference type="PhosphoSitePlus" id="Q9WUT7"/>
<dbReference type="SwissPalm" id="Q9WUT7"/>
<dbReference type="jPOST" id="Q9WUT7"/>
<dbReference type="PaxDb" id="10090-ENSMUSP00000127024"/>
<dbReference type="ProteomicsDB" id="281130"/>
<dbReference type="Antibodypedia" id="3479">
    <property type="antibodies" value="637 antibodies from 37 providers"/>
</dbReference>
<dbReference type="DNASU" id="12769"/>
<dbReference type="Ensembl" id="ENSMUST00000163559.8">
    <property type="protein sequence ID" value="ENSMUSP00000131782.2"/>
    <property type="gene ID" value="ENSMUSG00000029530.17"/>
</dbReference>
<dbReference type="Ensembl" id="ENSMUST00000166236.9">
    <property type="protein sequence ID" value="ENSMUSP00000127024.2"/>
    <property type="gene ID" value="ENSMUSG00000029530.17"/>
</dbReference>
<dbReference type="Ensembl" id="ENSMUST00000168910.2">
    <property type="protein sequence ID" value="ENSMUSP00000126758.2"/>
    <property type="gene ID" value="ENSMUSG00000029530.17"/>
</dbReference>
<dbReference type="Ensembl" id="ENSMUST00000180093.2">
    <property type="protein sequence ID" value="ENSMUSP00000137144.2"/>
    <property type="gene ID" value="ENSMUSG00000029530.17"/>
</dbReference>
<dbReference type="GeneID" id="12769"/>
<dbReference type="KEGG" id="mmu:12769"/>
<dbReference type="UCSC" id="uc009sgl.2">
    <property type="organism name" value="mouse"/>
</dbReference>
<dbReference type="AGR" id="MGI:1341902"/>
<dbReference type="CTD" id="10803"/>
<dbReference type="MGI" id="MGI:1341902">
    <property type="gene designation" value="Ccr9"/>
</dbReference>
<dbReference type="VEuPathDB" id="HostDB:ENSMUSG00000029530"/>
<dbReference type="eggNOG" id="KOG3656">
    <property type="taxonomic scope" value="Eukaryota"/>
</dbReference>
<dbReference type="GeneTree" id="ENSGT01030000234667"/>
<dbReference type="InParanoid" id="Q9WUT7"/>
<dbReference type="OMA" id="FPYNCVL"/>
<dbReference type="OrthoDB" id="9942559at2759"/>
<dbReference type="PhylomeDB" id="Q9WUT7"/>
<dbReference type="TreeFam" id="TF330966"/>
<dbReference type="Reactome" id="R-MMU-380108">
    <property type="pathway name" value="Chemokine receptors bind chemokines"/>
</dbReference>
<dbReference type="Reactome" id="R-MMU-418594">
    <property type="pathway name" value="G alpha (i) signalling events"/>
</dbReference>
<dbReference type="BioGRID-ORCS" id="12769">
    <property type="hits" value="1 hit in 77 CRISPR screens"/>
</dbReference>
<dbReference type="ChiTaRS" id="Ccr9">
    <property type="organism name" value="mouse"/>
</dbReference>
<dbReference type="PRO" id="PR:Q9WUT7"/>
<dbReference type="Proteomes" id="UP000000589">
    <property type="component" value="Chromosome 9"/>
</dbReference>
<dbReference type="RNAct" id="Q9WUT7">
    <property type="molecule type" value="protein"/>
</dbReference>
<dbReference type="Bgee" id="ENSMUSG00000029530">
    <property type="expression patterns" value="Expressed in thymus and 90 other cell types or tissues"/>
</dbReference>
<dbReference type="ExpressionAtlas" id="Q9WUT7">
    <property type="expression patterns" value="baseline and differential"/>
</dbReference>
<dbReference type="GO" id="GO:0009986">
    <property type="term" value="C:cell surface"/>
    <property type="evidence" value="ECO:0007669"/>
    <property type="project" value="Ensembl"/>
</dbReference>
<dbReference type="GO" id="GO:0005886">
    <property type="term" value="C:plasma membrane"/>
    <property type="evidence" value="ECO:0007669"/>
    <property type="project" value="UniProtKB-SubCell"/>
</dbReference>
<dbReference type="GO" id="GO:0016493">
    <property type="term" value="F:C-C chemokine receptor activity"/>
    <property type="evidence" value="ECO:0000314"/>
    <property type="project" value="MGI"/>
</dbReference>
<dbReference type="GO" id="GO:0002305">
    <property type="term" value="P:CD8-positive, gamma-delta intraepithelial T cell differentiation"/>
    <property type="evidence" value="ECO:0000315"/>
    <property type="project" value="MGI"/>
</dbReference>
<dbReference type="GO" id="GO:0006935">
    <property type="term" value="P:chemotaxis"/>
    <property type="evidence" value="ECO:0000314"/>
    <property type="project" value="MGI"/>
</dbReference>
<dbReference type="GO" id="GO:0006955">
    <property type="term" value="P:immune response"/>
    <property type="evidence" value="ECO:0007669"/>
    <property type="project" value="InterPro"/>
</dbReference>
<dbReference type="FunFam" id="1.20.1070.10:FF:000035">
    <property type="entry name" value="C-C chemokine receptor type 6"/>
    <property type="match status" value="1"/>
</dbReference>
<dbReference type="Gene3D" id="1.20.1070.10">
    <property type="entry name" value="Rhodopsin 7-helix transmembrane proteins"/>
    <property type="match status" value="1"/>
</dbReference>
<dbReference type="InterPro" id="IPR050119">
    <property type="entry name" value="CCR1-9-like"/>
</dbReference>
<dbReference type="InterPro" id="IPR004069">
    <property type="entry name" value="Chemokine_CCR9"/>
</dbReference>
<dbReference type="InterPro" id="IPR000355">
    <property type="entry name" value="Chemokine_rcpt"/>
</dbReference>
<dbReference type="InterPro" id="IPR000276">
    <property type="entry name" value="GPCR_Rhodpsn"/>
</dbReference>
<dbReference type="InterPro" id="IPR017452">
    <property type="entry name" value="GPCR_Rhodpsn_7TM"/>
</dbReference>
<dbReference type="PANTHER" id="PTHR10489:SF664">
    <property type="entry name" value="C-C CHEMOKINE RECEPTOR TYPE 9"/>
    <property type="match status" value="1"/>
</dbReference>
<dbReference type="PANTHER" id="PTHR10489">
    <property type="entry name" value="CELL ADHESION MOLECULE"/>
    <property type="match status" value="1"/>
</dbReference>
<dbReference type="Pfam" id="PF00001">
    <property type="entry name" value="7tm_1"/>
    <property type="match status" value="1"/>
</dbReference>
<dbReference type="PRINTS" id="PR00657">
    <property type="entry name" value="CCCHEMOKINER"/>
</dbReference>
<dbReference type="PRINTS" id="PR01531">
    <property type="entry name" value="CHEMOKINER9"/>
</dbReference>
<dbReference type="PRINTS" id="PR00237">
    <property type="entry name" value="GPCRRHODOPSN"/>
</dbReference>
<dbReference type="SUPFAM" id="SSF81321">
    <property type="entry name" value="Family A G protein-coupled receptor-like"/>
    <property type="match status" value="1"/>
</dbReference>
<dbReference type="PROSITE" id="PS00237">
    <property type="entry name" value="G_PROTEIN_RECEP_F1_1"/>
    <property type="match status" value="1"/>
</dbReference>
<dbReference type="PROSITE" id="PS50262">
    <property type="entry name" value="G_PROTEIN_RECEP_F1_2"/>
    <property type="match status" value="1"/>
</dbReference>
<protein>
    <recommendedName>
        <fullName>C-C chemokine receptor type 9</fullName>
        <shortName>C-C CKR-9</shortName>
        <shortName>CC-CKR-9</shortName>
        <shortName>CCR-9</shortName>
    </recommendedName>
    <alternativeName>
        <fullName>Chemokine C-C receptor 10</fullName>
    </alternativeName>
    <cdAntigenName>CDw199</cdAntigenName>
</protein>
<evidence type="ECO:0000250" key="1">
    <source>
        <dbReference type="UniProtKB" id="P51686"/>
    </source>
</evidence>
<evidence type="ECO:0000255" key="2"/>
<evidence type="ECO:0000255" key="3">
    <source>
        <dbReference type="PROSITE-ProRule" id="PRU00521"/>
    </source>
</evidence>
<reference key="1">
    <citation type="journal article" date="1999" name="J. Immunol.">
        <title>Identification of the orphan chemokine receptor GPR-9-6 as CCR9, the receptor for the chemokine TECK.</title>
        <authorList>
            <person name="Zaballos A."/>
            <person name="Gutierrez J."/>
            <person name="Varona R."/>
            <person name="Ardavin C."/>
            <person name="Marquez G."/>
        </authorList>
    </citation>
    <scope>NUCLEOTIDE SEQUENCE [MRNA]</scope>
    <source>
        <tissue>Thymus</tissue>
    </source>
</reference>
<reference key="2">
    <citation type="journal article" date="2000" name="Eur. J. Immunol.">
        <title>The chemokine TECK is expressed by thymic and intestinal epithelial cells and attracts double- and single-positive thymocytes expressing the TECK receptor CCR9.</title>
        <authorList>
            <person name="Wurbel M.A."/>
            <person name="Philippe J.-M."/>
            <person name="Nguyen C."/>
            <person name="Victorero G."/>
            <person name="Freeman T."/>
            <person name="Wooding P."/>
            <person name="Miazek A."/>
            <person name="Mattei M.-G."/>
            <person name="Malissen M."/>
            <person name="Jordan B.R."/>
            <person name="Malissen B."/>
            <person name="Carrier A."/>
            <person name="Naquet P."/>
        </authorList>
    </citation>
    <scope>NUCLEOTIDE SEQUENCE [MRNA]</scope>
</reference>
<reference key="3">
    <citation type="journal article" date="2005" name="Science">
        <title>The transcriptional landscape of the mammalian genome.</title>
        <authorList>
            <person name="Carninci P."/>
            <person name="Kasukawa T."/>
            <person name="Katayama S."/>
            <person name="Gough J."/>
            <person name="Frith M.C."/>
            <person name="Maeda N."/>
            <person name="Oyama R."/>
            <person name="Ravasi T."/>
            <person name="Lenhard B."/>
            <person name="Wells C."/>
            <person name="Kodzius R."/>
            <person name="Shimokawa K."/>
            <person name="Bajic V.B."/>
            <person name="Brenner S.E."/>
            <person name="Batalov S."/>
            <person name="Forrest A.R."/>
            <person name="Zavolan M."/>
            <person name="Davis M.J."/>
            <person name="Wilming L.G."/>
            <person name="Aidinis V."/>
            <person name="Allen J.E."/>
            <person name="Ambesi-Impiombato A."/>
            <person name="Apweiler R."/>
            <person name="Aturaliya R.N."/>
            <person name="Bailey T.L."/>
            <person name="Bansal M."/>
            <person name="Baxter L."/>
            <person name="Beisel K.W."/>
            <person name="Bersano T."/>
            <person name="Bono H."/>
            <person name="Chalk A.M."/>
            <person name="Chiu K.P."/>
            <person name="Choudhary V."/>
            <person name="Christoffels A."/>
            <person name="Clutterbuck D.R."/>
            <person name="Crowe M.L."/>
            <person name="Dalla E."/>
            <person name="Dalrymple B.P."/>
            <person name="de Bono B."/>
            <person name="Della Gatta G."/>
            <person name="di Bernardo D."/>
            <person name="Down T."/>
            <person name="Engstrom P."/>
            <person name="Fagiolini M."/>
            <person name="Faulkner G."/>
            <person name="Fletcher C.F."/>
            <person name="Fukushima T."/>
            <person name="Furuno M."/>
            <person name="Futaki S."/>
            <person name="Gariboldi M."/>
            <person name="Georgii-Hemming P."/>
            <person name="Gingeras T.R."/>
            <person name="Gojobori T."/>
            <person name="Green R.E."/>
            <person name="Gustincich S."/>
            <person name="Harbers M."/>
            <person name="Hayashi Y."/>
            <person name="Hensch T.K."/>
            <person name="Hirokawa N."/>
            <person name="Hill D."/>
            <person name="Huminiecki L."/>
            <person name="Iacono M."/>
            <person name="Ikeo K."/>
            <person name="Iwama A."/>
            <person name="Ishikawa T."/>
            <person name="Jakt M."/>
            <person name="Kanapin A."/>
            <person name="Katoh M."/>
            <person name="Kawasawa Y."/>
            <person name="Kelso J."/>
            <person name="Kitamura H."/>
            <person name="Kitano H."/>
            <person name="Kollias G."/>
            <person name="Krishnan S.P."/>
            <person name="Kruger A."/>
            <person name="Kummerfeld S.K."/>
            <person name="Kurochkin I.V."/>
            <person name="Lareau L.F."/>
            <person name="Lazarevic D."/>
            <person name="Lipovich L."/>
            <person name="Liu J."/>
            <person name="Liuni S."/>
            <person name="McWilliam S."/>
            <person name="Madan Babu M."/>
            <person name="Madera M."/>
            <person name="Marchionni L."/>
            <person name="Matsuda H."/>
            <person name="Matsuzawa S."/>
            <person name="Miki H."/>
            <person name="Mignone F."/>
            <person name="Miyake S."/>
            <person name="Morris K."/>
            <person name="Mottagui-Tabar S."/>
            <person name="Mulder N."/>
            <person name="Nakano N."/>
            <person name="Nakauchi H."/>
            <person name="Ng P."/>
            <person name="Nilsson R."/>
            <person name="Nishiguchi S."/>
            <person name="Nishikawa S."/>
            <person name="Nori F."/>
            <person name="Ohara O."/>
            <person name="Okazaki Y."/>
            <person name="Orlando V."/>
            <person name="Pang K.C."/>
            <person name="Pavan W.J."/>
            <person name="Pavesi G."/>
            <person name="Pesole G."/>
            <person name="Petrovsky N."/>
            <person name="Piazza S."/>
            <person name="Reed J."/>
            <person name="Reid J.F."/>
            <person name="Ring B.Z."/>
            <person name="Ringwald M."/>
            <person name="Rost B."/>
            <person name="Ruan Y."/>
            <person name="Salzberg S.L."/>
            <person name="Sandelin A."/>
            <person name="Schneider C."/>
            <person name="Schoenbach C."/>
            <person name="Sekiguchi K."/>
            <person name="Semple C.A."/>
            <person name="Seno S."/>
            <person name="Sessa L."/>
            <person name="Sheng Y."/>
            <person name="Shibata Y."/>
            <person name="Shimada H."/>
            <person name="Shimada K."/>
            <person name="Silva D."/>
            <person name="Sinclair B."/>
            <person name="Sperling S."/>
            <person name="Stupka E."/>
            <person name="Sugiura K."/>
            <person name="Sultana R."/>
            <person name="Takenaka Y."/>
            <person name="Taki K."/>
            <person name="Tammoja K."/>
            <person name="Tan S.L."/>
            <person name="Tang S."/>
            <person name="Taylor M.S."/>
            <person name="Tegner J."/>
            <person name="Teichmann S.A."/>
            <person name="Ueda H.R."/>
            <person name="van Nimwegen E."/>
            <person name="Verardo R."/>
            <person name="Wei C.L."/>
            <person name="Yagi K."/>
            <person name="Yamanishi H."/>
            <person name="Zabarovsky E."/>
            <person name="Zhu S."/>
            <person name="Zimmer A."/>
            <person name="Hide W."/>
            <person name="Bult C."/>
            <person name="Grimmond S.M."/>
            <person name="Teasdale R.D."/>
            <person name="Liu E.T."/>
            <person name="Brusic V."/>
            <person name="Quackenbush J."/>
            <person name="Wahlestedt C."/>
            <person name="Mattick J.S."/>
            <person name="Hume D.A."/>
            <person name="Kai C."/>
            <person name="Sasaki D."/>
            <person name="Tomaru Y."/>
            <person name="Fukuda S."/>
            <person name="Kanamori-Katayama M."/>
            <person name="Suzuki M."/>
            <person name="Aoki J."/>
            <person name="Arakawa T."/>
            <person name="Iida J."/>
            <person name="Imamura K."/>
            <person name="Itoh M."/>
            <person name="Kato T."/>
            <person name="Kawaji H."/>
            <person name="Kawagashira N."/>
            <person name="Kawashima T."/>
            <person name="Kojima M."/>
            <person name="Kondo S."/>
            <person name="Konno H."/>
            <person name="Nakano K."/>
            <person name="Ninomiya N."/>
            <person name="Nishio T."/>
            <person name="Okada M."/>
            <person name="Plessy C."/>
            <person name="Shibata K."/>
            <person name="Shiraki T."/>
            <person name="Suzuki S."/>
            <person name="Tagami M."/>
            <person name="Waki K."/>
            <person name="Watahiki A."/>
            <person name="Okamura-Oho Y."/>
            <person name="Suzuki H."/>
            <person name="Kawai J."/>
            <person name="Hayashizaki Y."/>
        </authorList>
    </citation>
    <scope>NUCLEOTIDE SEQUENCE [LARGE SCALE MRNA]</scope>
    <source>
        <strain>C57BL/6J</strain>
        <strain>NOD</strain>
        <tissue>Skin</tissue>
        <tissue>Thymus</tissue>
    </source>
</reference>
<reference key="4">
    <citation type="journal article" date="2004" name="Genome Res.">
        <title>The status, quality, and expansion of the NIH full-length cDNA project: the Mammalian Gene Collection (MGC).</title>
        <authorList>
            <consortium name="The MGC Project Team"/>
        </authorList>
    </citation>
    <scope>NUCLEOTIDE SEQUENCE [LARGE SCALE MRNA]</scope>
    <source>
        <tissue>Brain</tissue>
    </source>
</reference>
<feature type="chain" id="PRO_0000069292" description="C-C chemokine receptor type 9">
    <location>
        <begin position="1"/>
        <end position="369"/>
    </location>
</feature>
<feature type="topological domain" description="Extracellular" evidence="1">
    <location>
        <begin position="1"/>
        <end position="48"/>
    </location>
</feature>
<feature type="transmembrane region" description="Helical; Name=1" evidence="1">
    <location>
        <begin position="49"/>
        <end position="74"/>
    </location>
</feature>
<feature type="topological domain" description="Cytoplasmic" evidence="1">
    <location>
        <begin position="75"/>
        <end position="85"/>
    </location>
</feature>
<feature type="transmembrane region" description="Helical; Name=2" evidence="1">
    <location>
        <begin position="86"/>
        <end position="109"/>
    </location>
</feature>
<feature type="topological domain" description="Extracellular" evidence="1">
    <location>
        <begin position="110"/>
        <end position="120"/>
    </location>
</feature>
<feature type="transmembrane region" description="Helical; Name=3" evidence="1">
    <location>
        <begin position="121"/>
        <end position="150"/>
    </location>
</feature>
<feature type="topological domain" description="Cytoplasmic" evidence="1">
    <location>
        <begin position="151"/>
        <end position="159"/>
    </location>
</feature>
<feature type="transmembrane region" description="Helical; Name=4" evidence="1">
    <location>
        <begin position="160"/>
        <end position="185"/>
    </location>
</feature>
<feature type="topological domain" description="Extracellular" evidence="1">
    <location>
        <begin position="186"/>
        <end position="208"/>
    </location>
</feature>
<feature type="transmembrane region" description="Helical; Name=5" evidence="1">
    <location>
        <begin position="209"/>
        <end position="243"/>
    </location>
</feature>
<feature type="topological domain" description="Cytoplasmic" evidence="1">
    <location>
        <begin position="244"/>
        <end position="248"/>
    </location>
</feature>
<feature type="transmembrane region" description="Helical; Name=6" evidence="1">
    <location>
        <begin position="249"/>
        <end position="283"/>
    </location>
</feature>
<feature type="topological domain" description="Extracellular" evidence="1">
    <location>
        <begin position="284"/>
        <end position="290"/>
    </location>
</feature>
<feature type="transmembrane region" description="Helical; Name=7" evidence="1">
    <location>
        <begin position="291"/>
        <end position="321"/>
    </location>
</feature>
<feature type="topological domain" description="Cytoplasmic" evidence="1">
    <location>
        <begin position="322"/>
        <end position="369"/>
    </location>
</feature>
<feature type="glycosylation site" description="N-linked (GlcNAc...) asparagine" evidence="2">
    <location>
        <position position="32"/>
    </location>
</feature>
<feature type="disulfide bond" evidence="1">
    <location>
        <begin position="38"/>
        <end position="289"/>
    </location>
</feature>
<feature type="disulfide bond" evidence="1 3">
    <location>
        <begin position="119"/>
        <end position="198"/>
    </location>
</feature>
<comment type="function">
    <text>Receptor for chemokine SCYA25/TECK. Subsequently transduces a signal by increasing the intracellular calcium ions level.</text>
</comment>
<comment type="subcellular location">
    <subcellularLocation>
        <location evidence="1">Cell membrane</location>
        <topology evidence="1">Multi-pass membrane protein</topology>
    </subcellularLocation>
</comment>
<comment type="tissue specificity">
    <text>Highly expressed in the thymus and low in lymph nodes and spleen.</text>
</comment>
<comment type="similarity">
    <text evidence="3">Belongs to the G-protein coupled receptor 1 family.</text>
</comment>
<organism>
    <name type="scientific">Mus musculus</name>
    <name type="common">Mouse</name>
    <dbReference type="NCBI Taxonomy" id="10090"/>
    <lineage>
        <taxon>Eukaryota</taxon>
        <taxon>Metazoa</taxon>
        <taxon>Chordata</taxon>
        <taxon>Craniata</taxon>
        <taxon>Vertebrata</taxon>
        <taxon>Euteleostomi</taxon>
        <taxon>Mammalia</taxon>
        <taxon>Eutheria</taxon>
        <taxon>Euarchontoglires</taxon>
        <taxon>Glires</taxon>
        <taxon>Rodentia</taxon>
        <taxon>Myomorpha</taxon>
        <taxon>Muroidea</taxon>
        <taxon>Muridae</taxon>
        <taxon>Murinae</taxon>
        <taxon>Mus</taxon>
        <taxon>Mus</taxon>
    </lineage>
</organism>
<name>CCR9_MOUSE</name>
<gene>
    <name type="primary">Ccr9</name>
    <name type="synonym">Cmkbr10</name>
</gene>